<proteinExistence type="inferred from homology"/>
<reference key="1">
    <citation type="journal article" date="2003" name="Proc. Natl. Acad. Sci. U.S.A.">
        <title>Complete genome sequence of the marine planctomycete Pirellula sp. strain 1.</title>
        <authorList>
            <person name="Gloeckner F.O."/>
            <person name="Kube M."/>
            <person name="Bauer M."/>
            <person name="Teeling H."/>
            <person name="Lombardot T."/>
            <person name="Ludwig W."/>
            <person name="Gade D."/>
            <person name="Beck A."/>
            <person name="Borzym K."/>
            <person name="Heitmann K."/>
            <person name="Rabus R."/>
            <person name="Schlesner H."/>
            <person name="Amann R."/>
            <person name="Reinhardt R."/>
        </authorList>
    </citation>
    <scope>NUCLEOTIDE SEQUENCE [LARGE SCALE GENOMIC DNA]</scope>
    <source>
        <strain>DSM 10527 / NCIMB 13988 / SH1</strain>
    </source>
</reference>
<keyword id="KW-1003">Cell membrane</keyword>
<keyword id="KW-0472">Membrane</keyword>
<keyword id="KW-1185">Reference proteome</keyword>
<keyword id="KW-0812">Transmembrane</keyword>
<keyword id="KW-1133">Transmembrane helix</keyword>
<sequence>MAMIDLTHDWQLLAQNPAGGLNSSSLLLLVGVFLALFFAAVLGFFFLRYGKLWFQAFMSDADVQLLNLIRMHFTKVNPNVIVQAKVMVAQAGLNIGRRDGISTHRLEAHYLAGGNVMNVIHAIIAAHRAQIPLEFDQAAAIDLAGRDVLDAVQTSVYPKVIDCPDPKRSGKTTLSAITKNGVELRVRTRVTVRTNIEQLIGGATEDTVIARVGEAIISSIGSAETHFKVLENPDMITRVVLSRGLDAQTAFEIVSIDIADIDVGENIGARLQNDQAEADTRVARAQAERRRAEAIAAEQQMNARVSENRSRLVLAEADVPRALAEAFKAGRIGNVSSVAAAEGSA</sequence>
<evidence type="ECO:0000255" key="1">
    <source>
        <dbReference type="HAMAP-Rule" id="MF_01562"/>
    </source>
</evidence>
<comment type="function">
    <text evidence="1">Found in functional membrane microdomains (FMM) that may be equivalent to eukaryotic membrane rafts. FMMs are highly dynamic and increase in number as cells age. Flotillins are thought to be important factors in membrane fluidity.</text>
</comment>
<comment type="subunit">
    <text evidence="1">Homooligomerizes.</text>
</comment>
<comment type="subcellular location">
    <subcellularLocation>
        <location evidence="1">Cell membrane</location>
        <topology evidence="1">Single-pass membrane protein</topology>
    </subcellularLocation>
    <subcellularLocation>
        <location evidence="1">Membrane raft</location>
        <topology evidence="1">Single-pass membrane protein</topology>
    </subcellularLocation>
</comment>
<comment type="similarity">
    <text evidence="1">Belongs to the flotillin-like FloA family.</text>
</comment>
<dbReference type="EMBL" id="BX294143">
    <property type="protein sequence ID" value="CAD74711.1"/>
    <property type="molecule type" value="Genomic_DNA"/>
</dbReference>
<dbReference type="RefSeq" id="NP_867166.1">
    <property type="nucleotide sequence ID" value="NC_005027.1"/>
</dbReference>
<dbReference type="RefSeq" id="WP_007327752.1">
    <property type="nucleotide sequence ID" value="NC_005027.1"/>
</dbReference>
<dbReference type="SMR" id="Q7UQJ2"/>
<dbReference type="STRING" id="243090.RB6291"/>
<dbReference type="EnsemblBacteria" id="CAD74711">
    <property type="protein sequence ID" value="CAD74711"/>
    <property type="gene ID" value="RB6291"/>
</dbReference>
<dbReference type="KEGG" id="rba:RB6291"/>
<dbReference type="PATRIC" id="fig|243090.15.peg.3033"/>
<dbReference type="eggNOG" id="COG4864">
    <property type="taxonomic scope" value="Bacteria"/>
</dbReference>
<dbReference type="HOGENOM" id="CLU_836378_0_0_0"/>
<dbReference type="InParanoid" id="Q7UQJ2"/>
<dbReference type="OrthoDB" id="9808365at2"/>
<dbReference type="Proteomes" id="UP000001025">
    <property type="component" value="Chromosome"/>
</dbReference>
<dbReference type="GO" id="GO:0045121">
    <property type="term" value="C:membrane raft"/>
    <property type="evidence" value="ECO:0007669"/>
    <property type="project" value="UniProtKB-SubCell"/>
</dbReference>
<dbReference type="GO" id="GO:0005886">
    <property type="term" value="C:plasma membrane"/>
    <property type="evidence" value="ECO:0007669"/>
    <property type="project" value="UniProtKB-SubCell"/>
</dbReference>
<dbReference type="HAMAP" id="MF_01562">
    <property type="entry name" value="FloA"/>
    <property type="match status" value="1"/>
</dbReference>
<dbReference type="InterPro" id="IPR022853">
    <property type="entry name" value="FloA"/>
</dbReference>
<dbReference type="NCBIfam" id="NF010186">
    <property type="entry name" value="PRK13665.1"/>
    <property type="match status" value="1"/>
</dbReference>
<dbReference type="Pfam" id="PF12127">
    <property type="entry name" value="FloA"/>
    <property type="match status" value="1"/>
</dbReference>
<name>FLOA1_RHOBA</name>
<protein>
    <recommendedName>
        <fullName evidence="1">Flotillin-like protein FloA 1</fullName>
    </recommendedName>
</protein>
<gene>
    <name evidence="1" type="primary">floA1</name>
    <name type="ordered locus">RB6291</name>
</gene>
<organism>
    <name type="scientific">Rhodopirellula baltica (strain DSM 10527 / NCIMB 13988 / SH1)</name>
    <dbReference type="NCBI Taxonomy" id="243090"/>
    <lineage>
        <taxon>Bacteria</taxon>
        <taxon>Pseudomonadati</taxon>
        <taxon>Planctomycetota</taxon>
        <taxon>Planctomycetia</taxon>
        <taxon>Pirellulales</taxon>
        <taxon>Pirellulaceae</taxon>
        <taxon>Rhodopirellula</taxon>
    </lineage>
</organism>
<accession>Q7UQJ2</accession>
<feature type="chain" id="PRO_0000232558" description="Flotillin-like protein FloA 1">
    <location>
        <begin position="1"/>
        <end position="345"/>
    </location>
</feature>
<feature type="transmembrane region" description="Helical" evidence="1">
    <location>
        <begin position="26"/>
        <end position="46"/>
    </location>
</feature>